<reference key="1">
    <citation type="journal article" date="1999" name="Virology">
        <title>Isolation and characterization of APSE-1, a bacteriophage infecting the secondary endosymbiont of acyrthosiphon pisum.</title>
        <authorList>
            <person name="van der Wilk F."/>
            <person name="Dullemans A.M."/>
            <person name="Verbeek M."/>
            <person name="van den Heuvel J.F.J.M."/>
        </authorList>
    </citation>
    <scope>NUCLEOTIDE SEQUENCE [LARGE SCALE GENOMIC DNA]</scope>
</reference>
<dbReference type="EMBL" id="AF157835">
    <property type="protein sequence ID" value="AAF03979.1"/>
    <property type="molecule type" value="Genomic_DNA"/>
</dbReference>
<dbReference type="RefSeq" id="NP_050997.1">
    <property type="nucleotide sequence ID" value="NC_000935.1"/>
</dbReference>
<dbReference type="SMR" id="Q9T1R2"/>
<dbReference type="KEGG" id="vg:1262330"/>
<dbReference type="Proteomes" id="UP000000853">
    <property type="component" value="Genome"/>
</dbReference>
<dbReference type="GO" id="GO:0098024">
    <property type="term" value="C:virus tail, fiber"/>
    <property type="evidence" value="ECO:0007669"/>
    <property type="project" value="UniProtKB-KW"/>
</dbReference>
<dbReference type="Gene3D" id="2.60.40.3940">
    <property type="match status" value="1"/>
</dbReference>
<dbReference type="Gene3D" id="2.170.14.10">
    <property type="entry name" value="Phage P22 tailspike-like, N-terminal domain"/>
    <property type="match status" value="1"/>
</dbReference>
<dbReference type="InterPro" id="IPR054075">
    <property type="entry name" value="Gp53-like_C"/>
</dbReference>
<dbReference type="InterPro" id="IPR009093">
    <property type="entry name" value="P22_tailspike_N"/>
</dbReference>
<dbReference type="InterPro" id="IPR036730">
    <property type="entry name" value="P22_tailspike_N_sf"/>
</dbReference>
<dbReference type="Pfam" id="PF21882">
    <property type="entry name" value="Gp53-like_C"/>
    <property type="match status" value="1"/>
</dbReference>
<dbReference type="Pfam" id="PF09008">
    <property type="entry name" value="Head_binding"/>
    <property type="match status" value="1"/>
</dbReference>
<dbReference type="SUPFAM" id="SSF51327">
    <property type="entry name" value="Head-binding domain of phage P22 tailspike protein"/>
    <property type="match status" value="1"/>
</dbReference>
<name>FIBER_BPAPS</name>
<organismHost>
    <name type="scientific">Escherichia coli</name>
    <dbReference type="NCBI Taxonomy" id="562"/>
</organismHost>
<organism>
    <name type="scientific">Acyrthosiphon pisum secondary endosymbiont phage 1</name>
    <name type="common">Bacteriophage APSE-1</name>
    <dbReference type="NCBI Taxonomy" id="2682836"/>
    <lineage>
        <taxon>Viruses</taxon>
        <taxon>Duplodnaviria</taxon>
        <taxon>Heunggongvirae</taxon>
        <taxon>Uroviricota</taxon>
        <taxon>Caudoviricetes</taxon>
        <taxon>Sendosyvirus</taxon>
        <taxon>Sendosyvirus APSE1</taxon>
    </lineage>
</organism>
<accession>Q9T1R2</accession>
<keyword id="KW-1185">Reference proteome</keyword>
<keyword id="KW-1230">Viral tail fiber protein</keyword>
<keyword id="KW-1227">Viral tail protein</keyword>
<keyword id="KW-0946">Virion</keyword>
<feature type="chain" id="PRO_0000077759" description="Putative tail fiber protein gp36">
    <location>
        <begin position="1"/>
        <end position="339"/>
    </location>
</feature>
<gene>
    <name type="primary">36</name>
</gene>
<evidence type="ECO:0000305" key="1"/>
<comment type="function">
    <text evidence="1">Putative tail fiber protein.</text>
</comment>
<comment type="subcellular location">
    <subcellularLocation>
        <location evidence="1">Virion</location>
    </subcellularLocation>
</comment>
<comment type="similarity">
    <text evidence="1">To phage P22 head-binding domain.</text>
</comment>
<sequence>MSKIIPNIVVSMPTQLFTLRRKFQACSNGKIYIGKSNTDPTIPTNQIQVYIENEDGSTVPVAQPIMINHAGFPVYNGQIAKFVTVESHSMAVYDSDGAQQFYFADILKYGPNRFKEQAAQYIAYIEKLKGTTTQTTGDSTTDVMSQKACTDTFAEKNSKEPLKAGRLNLESSNGDTIFNLGGTDGSAGSEFAYVKNSKRTQIYDTATQTTLLFPQKNGTLAVEEDTYTKTEVDAKINSVKWTTNKLENGWMKDPNTGIIIQWGSVYKTDRSRKLFPMAFPNTLAGMGLANFNYDDTLSEMYAPNIMSADKVGFKMRQSLVTDGYKDSPLTDMRWIAIGW</sequence>
<protein>
    <recommendedName>
        <fullName evidence="1">Putative tail fiber protein gp36</fullName>
    </recommendedName>
    <alternativeName>
        <fullName evidence="1">Gene product 36</fullName>
        <shortName>gp36</shortName>
    </alternativeName>
</protein>
<proteinExistence type="predicted"/>